<accession>Q056X3</accession>
<gene>
    <name evidence="1" type="primary">hslV</name>
    <name type="ordered locus">BCc_376</name>
</gene>
<name>HSLV_BUCCC</name>
<proteinExistence type="inferred from homology"/>
<sequence>MTTILSVRVQGKVVIGGDGQATFGHTVMKSNVKKVRSIYKNQVIAGFAGGTADAFTLFELFEKKLEKYQGQLQRSAIELAKDWRTDRLLRKLEALLAVADKKNSLIITGTGDVIQPENDIIAIGSGGPYAQAAAYAYALVYNTNLKASNIVKKSLQIASNICIYTNQSFTIKEIKSEK</sequence>
<comment type="function">
    <text evidence="1">Protease subunit of a proteasome-like degradation complex believed to be a general protein degrading machinery.</text>
</comment>
<comment type="catalytic activity">
    <reaction evidence="1">
        <text>ATP-dependent cleavage of peptide bonds with broad specificity.</text>
        <dbReference type="EC" id="3.4.25.2"/>
    </reaction>
</comment>
<comment type="activity regulation">
    <text evidence="1">Allosterically activated by HslU binding.</text>
</comment>
<comment type="subunit">
    <text evidence="1">A double ring-shaped homohexamer of HslV is capped on each side by a ring-shaped HslU homohexamer. The assembly of the HslU/HslV complex is dependent on binding of ATP.</text>
</comment>
<comment type="subcellular location">
    <subcellularLocation>
        <location evidence="1">Cytoplasm</location>
    </subcellularLocation>
</comment>
<comment type="similarity">
    <text evidence="1">Belongs to the peptidase T1B family. HslV subfamily.</text>
</comment>
<keyword id="KW-0021">Allosteric enzyme</keyword>
<keyword id="KW-0963">Cytoplasm</keyword>
<keyword id="KW-0378">Hydrolase</keyword>
<keyword id="KW-0479">Metal-binding</keyword>
<keyword id="KW-0645">Protease</keyword>
<keyword id="KW-1185">Reference proteome</keyword>
<keyword id="KW-0915">Sodium</keyword>
<keyword id="KW-0888">Threonine protease</keyword>
<evidence type="ECO:0000255" key="1">
    <source>
        <dbReference type="HAMAP-Rule" id="MF_00248"/>
    </source>
</evidence>
<dbReference type="EC" id="3.4.25.2" evidence="1"/>
<dbReference type="EMBL" id="CP000263">
    <property type="protein sequence ID" value="ABJ90826.1"/>
    <property type="molecule type" value="Genomic_DNA"/>
</dbReference>
<dbReference type="RefSeq" id="WP_011672745.1">
    <property type="nucleotide sequence ID" value="NC_008513.1"/>
</dbReference>
<dbReference type="SMR" id="Q056X3"/>
<dbReference type="STRING" id="372461.BCc_376"/>
<dbReference type="MEROPS" id="T01.006"/>
<dbReference type="KEGG" id="bcc:BCc_376"/>
<dbReference type="eggNOG" id="COG5405">
    <property type="taxonomic scope" value="Bacteria"/>
</dbReference>
<dbReference type="HOGENOM" id="CLU_093872_1_0_6"/>
<dbReference type="OrthoDB" id="9804884at2"/>
<dbReference type="Proteomes" id="UP000000669">
    <property type="component" value="Chromosome"/>
</dbReference>
<dbReference type="GO" id="GO:0009376">
    <property type="term" value="C:HslUV protease complex"/>
    <property type="evidence" value="ECO:0007669"/>
    <property type="project" value="UniProtKB-UniRule"/>
</dbReference>
<dbReference type="GO" id="GO:0005839">
    <property type="term" value="C:proteasome core complex"/>
    <property type="evidence" value="ECO:0007669"/>
    <property type="project" value="InterPro"/>
</dbReference>
<dbReference type="GO" id="GO:0046872">
    <property type="term" value="F:metal ion binding"/>
    <property type="evidence" value="ECO:0007669"/>
    <property type="project" value="UniProtKB-KW"/>
</dbReference>
<dbReference type="GO" id="GO:0004298">
    <property type="term" value="F:threonine-type endopeptidase activity"/>
    <property type="evidence" value="ECO:0007669"/>
    <property type="project" value="UniProtKB-KW"/>
</dbReference>
<dbReference type="GO" id="GO:0051603">
    <property type="term" value="P:proteolysis involved in protein catabolic process"/>
    <property type="evidence" value="ECO:0007669"/>
    <property type="project" value="InterPro"/>
</dbReference>
<dbReference type="CDD" id="cd01913">
    <property type="entry name" value="protease_HslV"/>
    <property type="match status" value="1"/>
</dbReference>
<dbReference type="FunFam" id="3.60.20.10:FF:000002">
    <property type="entry name" value="ATP-dependent protease subunit HslV"/>
    <property type="match status" value="1"/>
</dbReference>
<dbReference type="Gene3D" id="3.60.20.10">
    <property type="entry name" value="Glutamine Phosphoribosylpyrophosphate, subunit 1, domain 1"/>
    <property type="match status" value="1"/>
</dbReference>
<dbReference type="HAMAP" id="MF_00248">
    <property type="entry name" value="HslV"/>
    <property type="match status" value="1"/>
</dbReference>
<dbReference type="InterPro" id="IPR022281">
    <property type="entry name" value="ATP-dep_Prtase_HsIV_su"/>
</dbReference>
<dbReference type="InterPro" id="IPR029055">
    <property type="entry name" value="Ntn_hydrolases_N"/>
</dbReference>
<dbReference type="InterPro" id="IPR001353">
    <property type="entry name" value="Proteasome_sua/b"/>
</dbReference>
<dbReference type="InterPro" id="IPR023333">
    <property type="entry name" value="Proteasome_suB-type"/>
</dbReference>
<dbReference type="NCBIfam" id="TIGR03692">
    <property type="entry name" value="ATP_dep_HslV"/>
    <property type="match status" value="1"/>
</dbReference>
<dbReference type="NCBIfam" id="NF003964">
    <property type="entry name" value="PRK05456.1"/>
    <property type="match status" value="1"/>
</dbReference>
<dbReference type="PANTHER" id="PTHR32194:SF0">
    <property type="entry name" value="ATP-DEPENDENT PROTEASE SUBUNIT HSLV"/>
    <property type="match status" value="1"/>
</dbReference>
<dbReference type="PANTHER" id="PTHR32194">
    <property type="entry name" value="METALLOPROTEASE TLDD"/>
    <property type="match status" value="1"/>
</dbReference>
<dbReference type="Pfam" id="PF00227">
    <property type="entry name" value="Proteasome"/>
    <property type="match status" value="1"/>
</dbReference>
<dbReference type="PIRSF" id="PIRSF039093">
    <property type="entry name" value="HslV"/>
    <property type="match status" value="1"/>
</dbReference>
<dbReference type="SUPFAM" id="SSF56235">
    <property type="entry name" value="N-terminal nucleophile aminohydrolases (Ntn hydrolases)"/>
    <property type="match status" value="1"/>
</dbReference>
<dbReference type="PROSITE" id="PS51476">
    <property type="entry name" value="PROTEASOME_BETA_2"/>
    <property type="match status" value="1"/>
</dbReference>
<protein>
    <recommendedName>
        <fullName evidence="1">ATP-dependent protease subunit HslV</fullName>
        <ecNumber evidence="1">3.4.25.2</ecNumber>
    </recommendedName>
</protein>
<feature type="chain" id="PRO_1000012588" description="ATP-dependent protease subunit HslV">
    <location>
        <begin position="1"/>
        <end position="178"/>
    </location>
</feature>
<feature type="active site" evidence="1">
    <location>
        <position position="2"/>
    </location>
</feature>
<feature type="binding site" evidence="1">
    <location>
        <position position="159"/>
    </location>
    <ligand>
        <name>Na(+)</name>
        <dbReference type="ChEBI" id="CHEBI:29101"/>
    </ligand>
</feature>
<feature type="binding site" evidence="1">
    <location>
        <position position="162"/>
    </location>
    <ligand>
        <name>Na(+)</name>
        <dbReference type="ChEBI" id="CHEBI:29101"/>
    </ligand>
</feature>
<feature type="binding site" evidence="1">
    <location>
        <position position="165"/>
    </location>
    <ligand>
        <name>Na(+)</name>
        <dbReference type="ChEBI" id="CHEBI:29101"/>
    </ligand>
</feature>
<organism>
    <name type="scientific">Buchnera aphidicola subsp. Cinara cedri (strain Cc)</name>
    <dbReference type="NCBI Taxonomy" id="372461"/>
    <lineage>
        <taxon>Bacteria</taxon>
        <taxon>Pseudomonadati</taxon>
        <taxon>Pseudomonadota</taxon>
        <taxon>Gammaproteobacteria</taxon>
        <taxon>Enterobacterales</taxon>
        <taxon>Erwiniaceae</taxon>
        <taxon>Buchnera</taxon>
    </lineage>
</organism>
<reference key="1">
    <citation type="journal article" date="2006" name="Science">
        <title>A small microbial genome: the end of a long symbiotic relationship?</title>
        <authorList>
            <person name="Perez-Brocal V."/>
            <person name="Gil R."/>
            <person name="Ramos S."/>
            <person name="Lamelas A."/>
            <person name="Postigo M."/>
            <person name="Michelena J.M."/>
            <person name="Silva F.J."/>
            <person name="Moya A."/>
            <person name="Latorre A."/>
        </authorList>
    </citation>
    <scope>NUCLEOTIDE SEQUENCE [LARGE SCALE GENOMIC DNA]</scope>
    <source>
        <strain>Cc</strain>
    </source>
</reference>